<organism>
    <name type="scientific">Anaeromyxobacter dehalogenans (strain 2CP-C)</name>
    <dbReference type="NCBI Taxonomy" id="290397"/>
    <lineage>
        <taxon>Bacteria</taxon>
        <taxon>Pseudomonadati</taxon>
        <taxon>Myxococcota</taxon>
        <taxon>Myxococcia</taxon>
        <taxon>Myxococcales</taxon>
        <taxon>Cystobacterineae</taxon>
        <taxon>Anaeromyxobacteraceae</taxon>
        <taxon>Anaeromyxobacter</taxon>
    </lineage>
</organism>
<gene>
    <name evidence="1" type="primary">murD</name>
    <name type="ordered locus">Adeh_3769</name>
</gene>
<reference key="1">
    <citation type="submission" date="2006-01" db="EMBL/GenBank/DDBJ databases">
        <title>Complete sequence of Anaeromyxobacter dehalogenans 2CP-C.</title>
        <authorList>
            <person name="Copeland A."/>
            <person name="Lucas S."/>
            <person name="Lapidus A."/>
            <person name="Barry K."/>
            <person name="Detter J.C."/>
            <person name="Glavina T."/>
            <person name="Hammon N."/>
            <person name="Israni S."/>
            <person name="Pitluck S."/>
            <person name="Brettin T."/>
            <person name="Bruce D."/>
            <person name="Han C."/>
            <person name="Tapia R."/>
            <person name="Gilna P."/>
            <person name="Kiss H."/>
            <person name="Schmutz J."/>
            <person name="Larimer F."/>
            <person name="Land M."/>
            <person name="Kyrpides N."/>
            <person name="Anderson I."/>
            <person name="Sanford R.A."/>
            <person name="Ritalahti K.M."/>
            <person name="Thomas H.S."/>
            <person name="Kirby J.R."/>
            <person name="Zhulin I.B."/>
            <person name="Loeffler F.E."/>
            <person name="Richardson P."/>
        </authorList>
    </citation>
    <scope>NUCLEOTIDE SEQUENCE [LARGE SCALE GENOMIC DNA]</scope>
    <source>
        <strain>2CP-C</strain>
    </source>
</reference>
<proteinExistence type="inferred from homology"/>
<name>MURD_ANADE</name>
<feature type="chain" id="PRO_0000257165" description="UDP-N-acetylmuramoylalanine--D-glutamate ligase">
    <location>
        <begin position="1"/>
        <end position="462"/>
    </location>
</feature>
<feature type="binding site" evidence="1">
    <location>
        <begin position="118"/>
        <end position="124"/>
    </location>
    <ligand>
        <name>ATP</name>
        <dbReference type="ChEBI" id="CHEBI:30616"/>
    </ligand>
</feature>
<sequence>MAAPELKGTRVTVVGLAKSGVAAARLCAREGARVTVTDRRGEAALGGALAALPASVTRRLGGHDAADFTGADLVVASPGVPLANPEIQAARRRGVPVWGEVELAARFLGGLPIVGITGTNGKSTTTALTGALLARHRRTFVGGNLGTPLSELVLSGEPAAAAVVELSSFQLEGIERFRARVAAVLNVTPDHLDRYPDVDAYAAAKARLFATQEPDDVAVANARDPRALAMAGASRGDLHTFGFGAPVPASARDEGGEPGPGGTAIWYTPRGRAPERYQLHNRALRGRHNRENAMAAVLCARLMGVPGEAVQAGLDAFPGLHHRLELVAEGRGVEWVNDSKATNVDSTFVGLAAFPAGAPRVVLIMGGRGKKAPYAPLRPLFGGRVKALLTIGEDAPAIERELGDLAPTEPCGDLPGAVRRAAVLSGPGDVVLLSPACASYDQFASYEERGEAFRRLATEQAR</sequence>
<dbReference type="EC" id="6.3.2.9" evidence="1"/>
<dbReference type="EMBL" id="CP000251">
    <property type="protein sequence ID" value="ABC83535.1"/>
    <property type="molecule type" value="Genomic_DNA"/>
</dbReference>
<dbReference type="RefSeq" id="WP_011422817.1">
    <property type="nucleotide sequence ID" value="NC_007760.1"/>
</dbReference>
<dbReference type="SMR" id="Q2IG29"/>
<dbReference type="STRING" id="290397.Adeh_3769"/>
<dbReference type="KEGG" id="ade:Adeh_3769"/>
<dbReference type="eggNOG" id="COG0771">
    <property type="taxonomic scope" value="Bacteria"/>
</dbReference>
<dbReference type="HOGENOM" id="CLU_032540_0_0_7"/>
<dbReference type="OrthoDB" id="9809796at2"/>
<dbReference type="UniPathway" id="UPA00219"/>
<dbReference type="Proteomes" id="UP000001935">
    <property type="component" value="Chromosome"/>
</dbReference>
<dbReference type="GO" id="GO:0005737">
    <property type="term" value="C:cytoplasm"/>
    <property type="evidence" value="ECO:0007669"/>
    <property type="project" value="UniProtKB-SubCell"/>
</dbReference>
<dbReference type="GO" id="GO:0005524">
    <property type="term" value="F:ATP binding"/>
    <property type="evidence" value="ECO:0007669"/>
    <property type="project" value="UniProtKB-UniRule"/>
</dbReference>
<dbReference type="GO" id="GO:0008764">
    <property type="term" value="F:UDP-N-acetylmuramoylalanine-D-glutamate ligase activity"/>
    <property type="evidence" value="ECO:0007669"/>
    <property type="project" value="UniProtKB-UniRule"/>
</dbReference>
<dbReference type="GO" id="GO:0051301">
    <property type="term" value="P:cell division"/>
    <property type="evidence" value="ECO:0007669"/>
    <property type="project" value="UniProtKB-KW"/>
</dbReference>
<dbReference type="GO" id="GO:0071555">
    <property type="term" value="P:cell wall organization"/>
    <property type="evidence" value="ECO:0007669"/>
    <property type="project" value="UniProtKB-KW"/>
</dbReference>
<dbReference type="GO" id="GO:0009252">
    <property type="term" value="P:peptidoglycan biosynthetic process"/>
    <property type="evidence" value="ECO:0007669"/>
    <property type="project" value="UniProtKB-UniRule"/>
</dbReference>
<dbReference type="GO" id="GO:0008360">
    <property type="term" value="P:regulation of cell shape"/>
    <property type="evidence" value="ECO:0007669"/>
    <property type="project" value="UniProtKB-KW"/>
</dbReference>
<dbReference type="Gene3D" id="3.90.190.20">
    <property type="entry name" value="Mur ligase, C-terminal domain"/>
    <property type="match status" value="1"/>
</dbReference>
<dbReference type="Gene3D" id="3.40.1190.10">
    <property type="entry name" value="Mur-like, catalytic domain"/>
    <property type="match status" value="1"/>
</dbReference>
<dbReference type="Gene3D" id="3.40.50.720">
    <property type="entry name" value="NAD(P)-binding Rossmann-like Domain"/>
    <property type="match status" value="1"/>
</dbReference>
<dbReference type="HAMAP" id="MF_00639">
    <property type="entry name" value="MurD"/>
    <property type="match status" value="1"/>
</dbReference>
<dbReference type="InterPro" id="IPR036565">
    <property type="entry name" value="Mur-like_cat_sf"/>
</dbReference>
<dbReference type="InterPro" id="IPR004101">
    <property type="entry name" value="Mur_ligase_C"/>
</dbReference>
<dbReference type="InterPro" id="IPR036615">
    <property type="entry name" value="Mur_ligase_C_dom_sf"/>
</dbReference>
<dbReference type="InterPro" id="IPR013221">
    <property type="entry name" value="Mur_ligase_cen"/>
</dbReference>
<dbReference type="InterPro" id="IPR005762">
    <property type="entry name" value="MurD"/>
</dbReference>
<dbReference type="NCBIfam" id="TIGR01087">
    <property type="entry name" value="murD"/>
    <property type="match status" value="1"/>
</dbReference>
<dbReference type="PANTHER" id="PTHR43692">
    <property type="entry name" value="UDP-N-ACETYLMURAMOYLALANINE--D-GLUTAMATE LIGASE"/>
    <property type="match status" value="1"/>
</dbReference>
<dbReference type="PANTHER" id="PTHR43692:SF1">
    <property type="entry name" value="UDP-N-ACETYLMURAMOYLALANINE--D-GLUTAMATE LIGASE"/>
    <property type="match status" value="1"/>
</dbReference>
<dbReference type="Pfam" id="PF02875">
    <property type="entry name" value="Mur_ligase_C"/>
    <property type="match status" value="1"/>
</dbReference>
<dbReference type="Pfam" id="PF08245">
    <property type="entry name" value="Mur_ligase_M"/>
    <property type="match status" value="1"/>
</dbReference>
<dbReference type="Pfam" id="PF21799">
    <property type="entry name" value="MurD-like_N"/>
    <property type="match status" value="1"/>
</dbReference>
<dbReference type="SUPFAM" id="SSF51984">
    <property type="entry name" value="MurCD N-terminal domain"/>
    <property type="match status" value="1"/>
</dbReference>
<dbReference type="SUPFAM" id="SSF53623">
    <property type="entry name" value="MurD-like peptide ligases, catalytic domain"/>
    <property type="match status" value="1"/>
</dbReference>
<dbReference type="SUPFAM" id="SSF53244">
    <property type="entry name" value="MurD-like peptide ligases, peptide-binding domain"/>
    <property type="match status" value="1"/>
</dbReference>
<keyword id="KW-0067">ATP-binding</keyword>
<keyword id="KW-0131">Cell cycle</keyword>
<keyword id="KW-0132">Cell division</keyword>
<keyword id="KW-0133">Cell shape</keyword>
<keyword id="KW-0961">Cell wall biogenesis/degradation</keyword>
<keyword id="KW-0963">Cytoplasm</keyword>
<keyword id="KW-0436">Ligase</keyword>
<keyword id="KW-0547">Nucleotide-binding</keyword>
<keyword id="KW-0573">Peptidoglycan synthesis</keyword>
<keyword id="KW-1185">Reference proteome</keyword>
<protein>
    <recommendedName>
        <fullName evidence="1">UDP-N-acetylmuramoylalanine--D-glutamate ligase</fullName>
        <ecNumber evidence="1">6.3.2.9</ecNumber>
    </recommendedName>
    <alternativeName>
        <fullName evidence="1">D-glutamic acid-adding enzyme</fullName>
    </alternativeName>
    <alternativeName>
        <fullName evidence="1">UDP-N-acetylmuramoyl-L-alanyl-D-glutamate synthetase</fullName>
    </alternativeName>
</protein>
<comment type="function">
    <text evidence="1">Cell wall formation. Catalyzes the addition of glutamate to the nucleotide precursor UDP-N-acetylmuramoyl-L-alanine (UMA).</text>
</comment>
<comment type="catalytic activity">
    <reaction evidence="1">
        <text>UDP-N-acetyl-alpha-D-muramoyl-L-alanine + D-glutamate + ATP = UDP-N-acetyl-alpha-D-muramoyl-L-alanyl-D-glutamate + ADP + phosphate + H(+)</text>
        <dbReference type="Rhea" id="RHEA:16429"/>
        <dbReference type="ChEBI" id="CHEBI:15378"/>
        <dbReference type="ChEBI" id="CHEBI:29986"/>
        <dbReference type="ChEBI" id="CHEBI:30616"/>
        <dbReference type="ChEBI" id="CHEBI:43474"/>
        <dbReference type="ChEBI" id="CHEBI:83898"/>
        <dbReference type="ChEBI" id="CHEBI:83900"/>
        <dbReference type="ChEBI" id="CHEBI:456216"/>
        <dbReference type="EC" id="6.3.2.9"/>
    </reaction>
</comment>
<comment type="pathway">
    <text evidence="1">Cell wall biogenesis; peptidoglycan biosynthesis.</text>
</comment>
<comment type="subcellular location">
    <subcellularLocation>
        <location evidence="1">Cytoplasm</location>
    </subcellularLocation>
</comment>
<comment type="similarity">
    <text evidence="1">Belongs to the MurCDEF family.</text>
</comment>
<evidence type="ECO:0000255" key="1">
    <source>
        <dbReference type="HAMAP-Rule" id="MF_00639"/>
    </source>
</evidence>
<accession>Q2IG29</accession>